<protein>
    <recommendedName>
        <fullName evidence="7">Soluble inorganic pyrophosphatase 1</fullName>
        <ecNumber evidence="6">3.6.1.1</ecNumber>
    </recommendedName>
    <alternativeName>
        <fullName evidence="7">Pyrophosphate phospho-hydrolase 1</fullName>
        <shortName evidence="7">PPase 1</shortName>
    </alternativeName>
</protein>
<gene>
    <name evidence="7" type="primary">PPA1</name>
    <name evidence="10" type="ordered locus">At1g01050</name>
    <name evidence="12" type="ORF">T25K16.5</name>
</gene>
<accession>Q93V56</accession>
<accession>Q9MAM9</accession>
<comment type="function">
    <text evidence="5 6">Catalyzes the irreversible hydrolysis of pyrophosphate (PPi) to phosphate. The MgPPi(2-) complex binds to the enzyme only after a free Mg(2+) ion has bound (Ref.9). No activity with glycerol-3-phosphate, glucose-6-phosphate, p-nitrophenylphosphate, ADP, NADP(+), NAD(+),NADH, NADPH or phosphoribosyl pyrophosphate as substrates (Ref.9). Controls the equilibrium of gluconeogenic reactions in the heterotrophic growth phase of early seedling establishment. Determinates the rate of cytosolic glycolysis, providing carbon for seed storage lipid accumulation (PubMed:22566496).</text>
</comment>
<comment type="catalytic activity">
    <reaction evidence="6">
        <text>diphosphate + H2O = 2 phosphate + H(+)</text>
        <dbReference type="Rhea" id="RHEA:24576"/>
        <dbReference type="ChEBI" id="CHEBI:15377"/>
        <dbReference type="ChEBI" id="CHEBI:15378"/>
        <dbReference type="ChEBI" id="CHEBI:33019"/>
        <dbReference type="ChEBI" id="CHEBI:43474"/>
        <dbReference type="EC" id="3.6.1.1"/>
    </reaction>
</comment>
<comment type="cofactor">
    <cofactor evidence="6">
        <name>Mg(2+)</name>
        <dbReference type="ChEBI" id="CHEBI:18420"/>
    </cofactor>
</comment>
<comment type="activity regulation">
    <text evidence="6">Inhibited by Zn(2+), Ca(2+), Ba(2+), Fe(2+), Co(2+), Cu(2+), Eu(2+), Eu(3+) and Mn(2+).</text>
</comment>
<comment type="biophysicochemical properties">
    <kinetics>
        <text evidence="6">kcat is 9.28 sec(-1) for pyrophosphate.</text>
    </kinetics>
</comment>
<comment type="subunit">
    <text evidence="6">Monomer.</text>
</comment>
<comment type="subcellular location">
    <subcellularLocation>
        <location evidence="4">Cytoplasm</location>
    </subcellularLocation>
</comment>
<comment type="tissue specificity">
    <text evidence="8">Ubiquitous. Lower level of expression in ovary, stigma and pollen.</text>
</comment>
<comment type="developmental stage">
    <text evidence="8">Expressed throughout plant development, with a slight reduction during senescence.</text>
</comment>
<comment type="similarity">
    <text evidence="9">Belongs to the PPase family.</text>
</comment>
<comment type="sequence caution" evidence="9">
    <conflict type="erroneous gene model prediction">
        <sequence resource="EMBL-CDS" id="AAF26475"/>
    </conflict>
</comment>
<feature type="chain" id="PRO_0000431795" description="Soluble inorganic pyrophosphatase 1">
    <location>
        <begin position="1"/>
        <end position="212"/>
    </location>
</feature>
<feature type="active site" description="Proton donor" evidence="1">
    <location>
        <position position="84"/>
    </location>
</feature>
<feature type="binding site" evidence="3">
    <location>
        <position position="62"/>
    </location>
    <ligand>
        <name>substrate</name>
    </ligand>
</feature>
<feature type="binding site" evidence="3">
    <location>
        <position position="76"/>
    </location>
    <ligand>
        <name>substrate</name>
    </ligand>
</feature>
<feature type="binding site" evidence="3">
    <location>
        <position position="88"/>
    </location>
    <ligand>
        <name>substrate</name>
    </ligand>
</feature>
<feature type="binding site" evidence="2">
    <location>
        <position position="98"/>
    </location>
    <ligand>
        <name>Mg(2+)</name>
        <dbReference type="ChEBI" id="CHEBI:18420"/>
        <label>1</label>
    </ligand>
</feature>
<feature type="binding site" evidence="2">
    <location>
        <position position="103"/>
    </location>
    <ligand>
        <name>Mg(2+)</name>
        <dbReference type="ChEBI" id="CHEBI:18420"/>
        <label>1</label>
    </ligand>
</feature>
<feature type="binding site" evidence="2">
    <location>
        <position position="103"/>
    </location>
    <ligand>
        <name>Mg(2+)</name>
        <dbReference type="ChEBI" id="CHEBI:18420"/>
        <label>2</label>
    </ligand>
</feature>
<feature type="binding site" evidence="2">
    <location>
        <position position="135"/>
    </location>
    <ligand>
        <name>Mg(2+)</name>
        <dbReference type="ChEBI" id="CHEBI:18420"/>
        <label>1</label>
    </ligand>
</feature>
<feature type="binding site" evidence="3">
    <location>
        <position position="172"/>
    </location>
    <ligand>
        <name>substrate</name>
    </ligand>
</feature>
<feature type="turn" evidence="13">
    <location>
        <begin position="35"/>
        <end position="38"/>
    </location>
</feature>
<feature type="turn" evidence="13">
    <location>
        <begin position="43"/>
        <end position="47"/>
    </location>
</feature>
<feature type="strand" evidence="13">
    <location>
        <begin position="48"/>
        <end position="55"/>
    </location>
</feature>
<feature type="strand" evidence="13">
    <location>
        <begin position="61"/>
        <end position="65"/>
    </location>
</feature>
<feature type="turn" evidence="13">
    <location>
        <begin position="67"/>
        <end position="69"/>
    </location>
</feature>
<feature type="strand" evidence="13">
    <location>
        <begin position="72"/>
        <end position="77"/>
    </location>
</feature>
<feature type="strand" evidence="13">
    <location>
        <begin position="79"/>
        <end position="81"/>
    </location>
</feature>
<feature type="strand" evidence="13">
    <location>
        <begin position="85"/>
        <end position="90"/>
    </location>
</feature>
<feature type="strand" evidence="13">
    <location>
        <begin position="103"/>
        <end position="107"/>
    </location>
</feature>
<feature type="strand" evidence="13">
    <location>
        <begin position="117"/>
        <end position="126"/>
    </location>
</feature>
<feature type="strand" evidence="13">
    <location>
        <begin position="128"/>
        <end position="130"/>
    </location>
</feature>
<feature type="strand" evidence="13">
    <location>
        <begin position="137"/>
        <end position="142"/>
    </location>
</feature>
<feature type="turn" evidence="13">
    <location>
        <begin position="146"/>
        <end position="150"/>
    </location>
</feature>
<feature type="helix" evidence="13">
    <location>
        <begin position="154"/>
        <end position="156"/>
    </location>
</feature>
<feature type="helix" evidence="13">
    <location>
        <begin position="159"/>
        <end position="171"/>
    </location>
</feature>
<feature type="helix" evidence="13">
    <location>
        <begin position="174"/>
        <end position="176"/>
    </location>
</feature>
<feature type="strand" evidence="13">
    <location>
        <begin position="180"/>
        <end position="182"/>
    </location>
</feature>
<feature type="helix" evidence="13">
    <location>
        <begin position="188"/>
        <end position="204"/>
    </location>
</feature>
<name>IPYR1_ARATH</name>
<reference key="1">
    <citation type="journal article" date="2000" name="Nature">
        <title>Sequence and analysis of chromosome 1 of the plant Arabidopsis thaliana.</title>
        <authorList>
            <person name="Theologis A."/>
            <person name="Ecker J.R."/>
            <person name="Palm C.J."/>
            <person name="Federspiel N.A."/>
            <person name="Kaul S."/>
            <person name="White O."/>
            <person name="Alonso J."/>
            <person name="Altafi H."/>
            <person name="Araujo R."/>
            <person name="Bowman C.L."/>
            <person name="Brooks S.Y."/>
            <person name="Buehler E."/>
            <person name="Chan A."/>
            <person name="Chao Q."/>
            <person name="Chen H."/>
            <person name="Cheuk R.F."/>
            <person name="Chin C.W."/>
            <person name="Chung M.K."/>
            <person name="Conn L."/>
            <person name="Conway A.B."/>
            <person name="Conway A.R."/>
            <person name="Creasy T.H."/>
            <person name="Dewar K."/>
            <person name="Dunn P."/>
            <person name="Etgu P."/>
            <person name="Feldblyum T.V."/>
            <person name="Feng J.-D."/>
            <person name="Fong B."/>
            <person name="Fujii C.Y."/>
            <person name="Gill J.E."/>
            <person name="Goldsmith A.D."/>
            <person name="Haas B."/>
            <person name="Hansen N.F."/>
            <person name="Hughes B."/>
            <person name="Huizar L."/>
            <person name="Hunter J.L."/>
            <person name="Jenkins J."/>
            <person name="Johnson-Hopson C."/>
            <person name="Khan S."/>
            <person name="Khaykin E."/>
            <person name="Kim C.J."/>
            <person name="Koo H.L."/>
            <person name="Kremenetskaia I."/>
            <person name="Kurtz D.B."/>
            <person name="Kwan A."/>
            <person name="Lam B."/>
            <person name="Langin-Hooper S."/>
            <person name="Lee A."/>
            <person name="Lee J.M."/>
            <person name="Lenz C.A."/>
            <person name="Li J.H."/>
            <person name="Li Y.-P."/>
            <person name="Lin X."/>
            <person name="Liu S.X."/>
            <person name="Liu Z.A."/>
            <person name="Luros J.S."/>
            <person name="Maiti R."/>
            <person name="Marziali A."/>
            <person name="Militscher J."/>
            <person name="Miranda M."/>
            <person name="Nguyen M."/>
            <person name="Nierman W.C."/>
            <person name="Osborne B.I."/>
            <person name="Pai G."/>
            <person name="Peterson J."/>
            <person name="Pham P.K."/>
            <person name="Rizzo M."/>
            <person name="Rooney T."/>
            <person name="Rowley D."/>
            <person name="Sakano H."/>
            <person name="Salzberg S.L."/>
            <person name="Schwartz J.R."/>
            <person name="Shinn P."/>
            <person name="Southwick A.M."/>
            <person name="Sun H."/>
            <person name="Tallon L.J."/>
            <person name="Tambunga G."/>
            <person name="Toriumi M.J."/>
            <person name="Town C.D."/>
            <person name="Utterback T."/>
            <person name="Van Aken S."/>
            <person name="Vaysberg M."/>
            <person name="Vysotskaia V.S."/>
            <person name="Walker M."/>
            <person name="Wu D."/>
            <person name="Yu G."/>
            <person name="Fraser C.M."/>
            <person name="Venter J.C."/>
            <person name="Davis R.W."/>
        </authorList>
    </citation>
    <scope>NUCLEOTIDE SEQUENCE [LARGE SCALE GENOMIC DNA]</scope>
    <source>
        <strain>cv. Columbia</strain>
    </source>
</reference>
<reference key="2">
    <citation type="journal article" date="2017" name="Plant J.">
        <title>Araport11: a complete reannotation of the Arabidopsis thaliana reference genome.</title>
        <authorList>
            <person name="Cheng C.Y."/>
            <person name="Krishnakumar V."/>
            <person name="Chan A.P."/>
            <person name="Thibaud-Nissen F."/>
            <person name="Schobel S."/>
            <person name="Town C.D."/>
        </authorList>
    </citation>
    <scope>GENOME REANNOTATION</scope>
    <source>
        <strain>cv. Columbia</strain>
    </source>
</reference>
<reference key="3">
    <citation type="journal article" date="2003" name="Science">
        <title>Empirical analysis of transcriptional activity in the Arabidopsis genome.</title>
        <authorList>
            <person name="Yamada K."/>
            <person name="Lim J."/>
            <person name="Dale J.M."/>
            <person name="Chen H."/>
            <person name="Shinn P."/>
            <person name="Palm C.J."/>
            <person name="Southwick A.M."/>
            <person name="Wu H.C."/>
            <person name="Kim C.J."/>
            <person name="Nguyen M."/>
            <person name="Pham P.K."/>
            <person name="Cheuk R.F."/>
            <person name="Karlin-Newmann G."/>
            <person name="Liu S.X."/>
            <person name="Lam B."/>
            <person name="Sakano H."/>
            <person name="Wu T."/>
            <person name="Yu G."/>
            <person name="Miranda M."/>
            <person name="Quach H.L."/>
            <person name="Tripp M."/>
            <person name="Chang C.H."/>
            <person name="Lee J.M."/>
            <person name="Toriumi M.J."/>
            <person name="Chan M.M."/>
            <person name="Tang C.C."/>
            <person name="Onodera C.S."/>
            <person name="Deng J.M."/>
            <person name="Akiyama K."/>
            <person name="Ansari Y."/>
            <person name="Arakawa T."/>
            <person name="Banh J."/>
            <person name="Banno F."/>
            <person name="Bowser L."/>
            <person name="Brooks S.Y."/>
            <person name="Carninci P."/>
            <person name="Chao Q."/>
            <person name="Choy N."/>
            <person name="Enju A."/>
            <person name="Goldsmith A.D."/>
            <person name="Gurjal M."/>
            <person name="Hansen N.F."/>
            <person name="Hayashizaki Y."/>
            <person name="Johnson-Hopson C."/>
            <person name="Hsuan V.W."/>
            <person name="Iida K."/>
            <person name="Karnes M."/>
            <person name="Khan S."/>
            <person name="Koesema E."/>
            <person name="Ishida J."/>
            <person name="Jiang P.X."/>
            <person name="Jones T."/>
            <person name="Kawai J."/>
            <person name="Kamiya A."/>
            <person name="Meyers C."/>
            <person name="Nakajima M."/>
            <person name="Narusaka M."/>
            <person name="Seki M."/>
            <person name="Sakurai T."/>
            <person name="Satou M."/>
            <person name="Tamse R."/>
            <person name="Vaysberg M."/>
            <person name="Wallender E.K."/>
            <person name="Wong C."/>
            <person name="Yamamura Y."/>
            <person name="Yuan S."/>
            <person name="Shinozaki K."/>
            <person name="Davis R.W."/>
            <person name="Theologis A."/>
            <person name="Ecker J.R."/>
        </authorList>
    </citation>
    <scope>NUCLEOTIDE SEQUENCE [LARGE SCALE MRNA]</scope>
    <source>
        <strain>cv. Columbia</strain>
    </source>
</reference>
<reference key="4">
    <citation type="submission" date="2002-03" db="EMBL/GenBank/DDBJ databases">
        <title>Full-length cDNA from Arabidopsis thaliana.</title>
        <authorList>
            <person name="Brover V.V."/>
            <person name="Troukhan M.E."/>
            <person name="Alexandrov N.A."/>
            <person name="Lu Y.-P."/>
            <person name="Flavell R.B."/>
            <person name="Feldmann K.A."/>
        </authorList>
    </citation>
    <scope>NUCLEOTIDE SEQUENCE [LARGE SCALE MRNA]</scope>
</reference>
<reference key="5">
    <citation type="submission" date="2006-07" db="EMBL/GenBank/DDBJ databases">
        <title>Large-scale analysis of RIKEN Arabidopsis full-length (RAFL) cDNAs.</title>
        <authorList>
            <person name="Totoki Y."/>
            <person name="Seki M."/>
            <person name="Ishida J."/>
            <person name="Nakajima M."/>
            <person name="Enju A."/>
            <person name="Kamiya A."/>
            <person name="Narusaka M."/>
            <person name="Shin-i T."/>
            <person name="Nakagawa M."/>
            <person name="Sakamoto N."/>
            <person name="Oishi K."/>
            <person name="Kohara Y."/>
            <person name="Kobayashi M."/>
            <person name="Toyoda A."/>
            <person name="Sakaki Y."/>
            <person name="Sakurai T."/>
            <person name="Iida K."/>
            <person name="Akiyama K."/>
            <person name="Satou M."/>
            <person name="Toyoda T."/>
            <person name="Konagaya A."/>
            <person name="Carninci P."/>
            <person name="Kawai J."/>
            <person name="Hayashizaki Y."/>
            <person name="Shinozaki K."/>
        </authorList>
    </citation>
    <scope>NUCLEOTIDE SEQUENCE [LARGE SCALE MRNA]</scope>
    <source>
        <strain>cv. Columbia</strain>
    </source>
</reference>
<reference key="6">
    <citation type="submission" date="2009-03" db="EMBL/GenBank/DDBJ databases">
        <title>ORF cloning and analysis of Arabidopsis transcription factor genes.</title>
        <authorList>
            <person name="Fujita M."/>
            <person name="Mizukado S."/>
            <person name="Seki M."/>
            <person name="Shinozaki K."/>
            <person name="Mitsuda N."/>
            <person name="Takiguchi Y."/>
            <person name="Takagi M."/>
        </authorList>
    </citation>
    <scope>NUCLEOTIDE SEQUENCE [LARGE SCALE MRNA]</scope>
</reference>
<reference key="7">
    <citation type="journal article" date="2004" name="FEBS Lett.">
        <title>Identification of an Arabidopsis inorganic pyrophosphatase capable of being imported into chloroplasts.</title>
        <authorList>
            <person name="Schulze S."/>
            <person name="Mant A."/>
            <person name="Kossmann J."/>
            <person name="Lloyd J.R."/>
        </authorList>
    </citation>
    <scope>GENE FAMILY</scope>
    <scope>NOMENCLATURE</scope>
</reference>
<reference key="8">
    <citation type="journal article" date="2005" name="Plant J.">
        <title>High-throughput protein localization in Arabidopsis using Agrobacterium-mediated transient expression of GFP-ORF fusions.</title>
        <authorList>
            <person name="Koroleva O.A."/>
            <person name="Tomlinson M.L."/>
            <person name="Leader D."/>
            <person name="Shaw P."/>
            <person name="Doonan J.H."/>
        </authorList>
    </citation>
    <scope>SUBCELLULAR LOCATION</scope>
</reference>
<reference key="9">
    <citation type="journal article" date="2007" name="Plant Sci.">
        <title>Characterization of two soluble inorganic pyrophosphatases from Arabidopsis thaliana.</title>
        <authorList>
            <person name="Navarro-De la Sancha E."/>
            <person name="Coello-Coutino M.P."/>
            <person name="Valencia-Turcotte L.G."/>
            <person name="Hernandez-Dominguez E.E."/>
            <person name="Trejo-Yepes G."/>
            <person name="Rodriguez-Sotres R."/>
        </authorList>
    </citation>
    <scope>FUNCTION</scope>
    <scope>CATALYTIC ACTIVITY</scope>
    <scope>SUBUNIT</scope>
    <scope>BIOPHYSICOCHEMICAL PROPERTIES</scope>
    <scope>COFACTOR</scope>
    <scope>ACTIVITY REGULATION</scope>
    <scope>TISSUE SPECIFICITY</scope>
    <scope>DEVELOPMENTAL STAGE</scope>
    <source>
        <strain>cv. Columbia</strain>
    </source>
</reference>
<reference key="10">
    <citation type="journal article" date="2012" name="Plant Physiol.">
        <title>Oil and protein accumulation in developing seeds is influenced by the expression of a cytosolic pyrophosphatase in Arabidopsis.</title>
        <authorList>
            <person name="Meyer K."/>
            <person name="Stecca K.L."/>
            <person name="Ewell-Hicks K."/>
            <person name="Allen S.M."/>
            <person name="Everard J.D."/>
        </authorList>
    </citation>
    <scope>FUNCTION</scope>
</reference>
<reference key="11">
    <citation type="submission" date="2013-07" db="PDB data bank">
        <title>Crystal structure of Inorganic pyrophosphatase PPA1 from Arabidopsis thaliana.</title>
        <authorList>
            <person name="Grzechowiak M."/>
            <person name="Ruszkowski M."/>
            <person name="Sikorski M."/>
            <person name="Jaskolski M."/>
        </authorList>
    </citation>
    <scope>X-RAY CRYSTALLOGRAPHY (1.93 ANGSTROMS) OF 33-212</scope>
</reference>
<keyword id="KW-0002">3D-structure</keyword>
<keyword id="KW-0963">Cytoplasm</keyword>
<keyword id="KW-0378">Hydrolase</keyword>
<keyword id="KW-0460">Magnesium</keyword>
<keyword id="KW-0479">Metal-binding</keyword>
<keyword id="KW-1185">Reference proteome</keyword>
<dbReference type="EC" id="3.6.1.1" evidence="6"/>
<dbReference type="EMBL" id="AC007323">
    <property type="protein sequence ID" value="AAF26475.1"/>
    <property type="status" value="ALT_SEQ"/>
    <property type="molecule type" value="Genomic_DNA"/>
</dbReference>
<dbReference type="EMBL" id="CP002684">
    <property type="protein sequence ID" value="AEE27222.1"/>
    <property type="molecule type" value="Genomic_DNA"/>
</dbReference>
<dbReference type="EMBL" id="CP002684">
    <property type="protein sequence ID" value="ANM60177.1"/>
    <property type="molecule type" value="Genomic_DNA"/>
</dbReference>
<dbReference type="EMBL" id="AY052717">
    <property type="protein sequence ID" value="AAK96621.1"/>
    <property type="molecule type" value="mRNA"/>
</dbReference>
<dbReference type="EMBL" id="AY057668">
    <property type="protein sequence ID" value="AAL15299.1"/>
    <property type="molecule type" value="mRNA"/>
</dbReference>
<dbReference type="EMBL" id="AY065201">
    <property type="protein sequence ID" value="AAL38377.1"/>
    <property type="molecule type" value="mRNA"/>
</dbReference>
<dbReference type="EMBL" id="AY081555">
    <property type="protein sequence ID" value="AAM10117.1"/>
    <property type="molecule type" value="mRNA"/>
</dbReference>
<dbReference type="EMBL" id="BT001144">
    <property type="protein sequence ID" value="AAN64535.1"/>
    <property type="molecule type" value="mRNA"/>
</dbReference>
<dbReference type="EMBL" id="AY085015">
    <property type="protein sequence ID" value="AAM61573.1"/>
    <property type="molecule type" value="mRNA"/>
</dbReference>
<dbReference type="EMBL" id="AK226833">
    <property type="protein sequence ID" value="BAE98927.1"/>
    <property type="molecule type" value="mRNA"/>
</dbReference>
<dbReference type="EMBL" id="AB493418">
    <property type="protein sequence ID" value="BAH30256.1"/>
    <property type="molecule type" value="mRNA"/>
</dbReference>
<dbReference type="PIR" id="C86141">
    <property type="entry name" value="C86141"/>
</dbReference>
<dbReference type="RefSeq" id="NP_001322481.1">
    <property type="nucleotide sequence ID" value="NM_001331245.1"/>
</dbReference>
<dbReference type="RefSeq" id="NP_171613.1">
    <property type="nucleotide sequence ID" value="NM_099987.4"/>
</dbReference>
<dbReference type="PDB" id="4LUG">
    <property type="method" value="X-ray"/>
    <property type="resolution" value="1.93 A"/>
    <property type="chains" value="A/B=33-212"/>
</dbReference>
<dbReference type="PDB" id="5LS0">
    <property type="method" value="X-ray"/>
    <property type="resolution" value="1.83 A"/>
    <property type="chains" value="A/B=30-208"/>
</dbReference>
<dbReference type="PDBsum" id="4LUG"/>
<dbReference type="PDBsum" id="5LS0"/>
<dbReference type="SMR" id="Q93V56"/>
<dbReference type="FunCoup" id="Q93V56">
    <property type="interactions" value="306"/>
</dbReference>
<dbReference type="IntAct" id="Q93V56">
    <property type="interactions" value="3"/>
</dbReference>
<dbReference type="STRING" id="3702.Q93V56"/>
<dbReference type="iPTMnet" id="Q93V56"/>
<dbReference type="PaxDb" id="3702-AT1G01050.1"/>
<dbReference type="ProteomicsDB" id="248488"/>
<dbReference type="EnsemblPlants" id="AT1G01050.1">
    <property type="protein sequence ID" value="AT1G01050.1"/>
    <property type="gene ID" value="AT1G01050"/>
</dbReference>
<dbReference type="EnsemblPlants" id="AT1G01050.2">
    <property type="protein sequence ID" value="AT1G01050.2"/>
    <property type="gene ID" value="AT1G01050"/>
</dbReference>
<dbReference type="GeneID" id="839579"/>
<dbReference type="Gramene" id="AT1G01050.1">
    <property type="protein sequence ID" value="AT1G01050.1"/>
    <property type="gene ID" value="AT1G01050"/>
</dbReference>
<dbReference type="Gramene" id="AT1G01050.2">
    <property type="protein sequence ID" value="AT1G01050.2"/>
    <property type="gene ID" value="AT1G01050"/>
</dbReference>
<dbReference type="KEGG" id="ath:AT1G01050"/>
<dbReference type="Araport" id="AT1G01050"/>
<dbReference type="TAIR" id="AT1G01050">
    <property type="gene designation" value="PPA1"/>
</dbReference>
<dbReference type="eggNOG" id="KOG1626">
    <property type="taxonomic scope" value="Eukaryota"/>
</dbReference>
<dbReference type="HOGENOM" id="CLU_073198_2_1_1"/>
<dbReference type="InParanoid" id="Q93V56"/>
<dbReference type="OMA" id="FDMVKYE"/>
<dbReference type="PhylomeDB" id="Q93V56"/>
<dbReference type="BRENDA" id="3.6.1.1">
    <property type="organism ID" value="399"/>
</dbReference>
<dbReference type="CD-CODE" id="4299E36E">
    <property type="entry name" value="Nucleolus"/>
</dbReference>
<dbReference type="EvolutionaryTrace" id="Q93V56"/>
<dbReference type="PRO" id="PR:Q93V56"/>
<dbReference type="Proteomes" id="UP000006548">
    <property type="component" value="Chromosome 1"/>
</dbReference>
<dbReference type="ExpressionAtlas" id="Q93V56">
    <property type="expression patterns" value="baseline and differential"/>
</dbReference>
<dbReference type="GO" id="GO:0005737">
    <property type="term" value="C:cytoplasm"/>
    <property type="evidence" value="ECO:0007005"/>
    <property type="project" value="TAIR"/>
</dbReference>
<dbReference type="GO" id="GO:0005829">
    <property type="term" value="C:cytosol"/>
    <property type="evidence" value="ECO:0000314"/>
    <property type="project" value="TAIR"/>
</dbReference>
<dbReference type="GO" id="GO:0005654">
    <property type="term" value="C:nucleoplasm"/>
    <property type="evidence" value="ECO:0000314"/>
    <property type="project" value="TAIR"/>
</dbReference>
<dbReference type="GO" id="GO:0005634">
    <property type="term" value="C:nucleus"/>
    <property type="evidence" value="ECO:0007005"/>
    <property type="project" value="TAIR"/>
</dbReference>
<dbReference type="GO" id="GO:0004427">
    <property type="term" value="F:inorganic diphosphate phosphatase activity"/>
    <property type="evidence" value="ECO:0000314"/>
    <property type="project" value="TAIR"/>
</dbReference>
<dbReference type="GO" id="GO:0000287">
    <property type="term" value="F:magnesium ion binding"/>
    <property type="evidence" value="ECO:0007669"/>
    <property type="project" value="InterPro"/>
</dbReference>
<dbReference type="GO" id="GO:0042546">
    <property type="term" value="P:cell wall biogenesis"/>
    <property type="evidence" value="ECO:0000315"/>
    <property type="project" value="TAIR"/>
</dbReference>
<dbReference type="GO" id="GO:0019915">
    <property type="term" value="P:lipid storage"/>
    <property type="evidence" value="ECO:0000315"/>
    <property type="project" value="TAIR"/>
</dbReference>
<dbReference type="GO" id="GO:0006796">
    <property type="term" value="P:phosphate-containing compound metabolic process"/>
    <property type="evidence" value="ECO:0007669"/>
    <property type="project" value="InterPro"/>
</dbReference>
<dbReference type="GO" id="GO:2000904">
    <property type="term" value="P:regulation of starch metabolic process"/>
    <property type="evidence" value="ECO:0000315"/>
    <property type="project" value="TAIR"/>
</dbReference>
<dbReference type="GO" id="GO:0005985">
    <property type="term" value="P:sucrose metabolic process"/>
    <property type="evidence" value="ECO:0000314"/>
    <property type="project" value="TAIR"/>
</dbReference>
<dbReference type="CDD" id="cd00412">
    <property type="entry name" value="pyrophosphatase"/>
    <property type="match status" value="1"/>
</dbReference>
<dbReference type="FunFam" id="3.90.80.10:FF:000002">
    <property type="entry name" value="Soluble inorganic pyrophosphatase 4"/>
    <property type="match status" value="1"/>
</dbReference>
<dbReference type="Gene3D" id="3.90.80.10">
    <property type="entry name" value="Inorganic pyrophosphatase"/>
    <property type="match status" value="1"/>
</dbReference>
<dbReference type="HAMAP" id="MF_00209">
    <property type="entry name" value="Inorganic_PPase"/>
    <property type="match status" value="1"/>
</dbReference>
<dbReference type="InterPro" id="IPR008162">
    <property type="entry name" value="Pyrophosphatase"/>
</dbReference>
<dbReference type="InterPro" id="IPR036649">
    <property type="entry name" value="Pyrophosphatase_sf"/>
</dbReference>
<dbReference type="PANTHER" id="PTHR10286">
    <property type="entry name" value="INORGANIC PYROPHOSPHATASE"/>
    <property type="match status" value="1"/>
</dbReference>
<dbReference type="Pfam" id="PF00719">
    <property type="entry name" value="Pyrophosphatase"/>
    <property type="match status" value="1"/>
</dbReference>
<dbReference type="SUPFAM" id="SSF50324">
    <property type="entry name" value="Inorganic pyrophosphatase"/>
    <property type="match status" value="1"/>
</dbReference>
<dbReference type="PROSITE" id="PS00387">
    <property type="entry name" value="PPASE"/>
    <property type="match status" value="1"/>
</dbReference>
<sequence>MSEETKDNQRLQRPAPRLNERILSSLSRRSVAAHPWHDLEIGPGAPQIFNVVVEITKGSKVKYELDKKTGLIKVDRILYSSVVYPHNYGFVPRTLCEDNDPIDVLVIMQEPVLPGCFLRARAIGLMPMIDQGEKDDKIIAVCVDDPEYKHYTDIKELPPHRLSEIRRFFEDYKKNENKEVAVNDFLPSESAVEAIQYSMDLYAEYILHTLRR</sequence>
<proteinExistence type="evidence at protein level"/>
<evidence type="ECO:0000250" key="1">
    <source>
        <dbReference type="UniProtKB" id="P00817"/>
    </source>
</evidence>
<evidence type="ECO:0000250" key="2">
    <source>
        <dbReference type="UniProtKB" id="P0A7A9"/>
    </source>
</evidence>
<evidence type="ECO:0000250" key="3">
    <source>
        <dbReference type="UniProtKB" id="P9WI55"/>
    </source>
</evidence>
<evidence type="ECO:0000269" key="4">
    <source>
    </source>
</evidence>
<evidence type="ECO:0000269" key="5">
    <source>
    </source>
</evidence>
<evidence type="ECO:0000269" key="6">
    <source ref="9"/>
</evidence>
<evidence type="ECO:0000303" key="7">
    <source>
    </source>
</evidence>
<evidence type="ECO:0000303" key="8">
    <source ref="9"/>
</evidence>
<evidence type="ECO:0000305" key="9"/>
<evidence type="ECO:0000312" key="10">
    <source>
        <dbReference type="Araport" id="AT1G01050"/>
    </source>
</evidence>
<evidence type="ECO:0000312" key="11">
    <source>
        <dbReference type="EMBL" id="AAL15299.1"/>
    </source>
</evidence>
<evidence type="ECO:0000312" key="12">
    <source>
        <dbReference type="EMBL" id="AAL38377.1"/>
    </source>
</evidence>
<evidence type="ECO:0007829" key="13">
    <source>
        <dbReference type="PDB" id="5LS0"/>
    </source>
</evidence>
<organism evidence="11">
    <name type="scientific">Arabidopsis thaliana</name>
    <name type="common">Mouse-ear cress</name>
    <dbReference type="NCBI Taxonomy" id="3702"/>
    <lineage>
        <taxon>Eukaryota</taxon>
        <taxon>Viridiplantae</taxon>
        <taxon>Streptophyta</taxon>
        <taxon>Embryophyta</taxon>
        <taxon>Tracheophyta</taxon>
        <taxon>Spermatophyta</taxon>
        <taxon>Magnoliopsida</taxon>
        <taxon>eudicotyledons</taxon>
        <taxon>Gunneridae</taxon>
        <taxon>Pentapetalae</taxon>
        <taxon>rosids</taxon>
        <taxon>malvids</taxon>
        <taxon>Brassicales</taxon>
        <taxon>Brassicaceae</taxon>
        <taxon>Camelineae</taxon>
        <taxon>Arabidopsis</taxon>
    </lineage>
</organism>